<name>RIOX2_PONAB</name>
<protein>
    <recommendedName>
        <fullName>Ribosomal oxygenase 2</fullName>
    </recommendedName>
    <alternativeName>
        <fullName>Bifunctional lysine-specific demethylase and histidyl-hydroxylase MINA</fullName>
        <ecNumber evidence="2">1.14.11.79</ecNumber>
    </alternativeName>
    <alternativeName>
        <fullName>Histone lysine demethylase MINA</fullName>
    </alternativeName>
    <alternativeName>
        <fullName>MYC-induced nuclear antigen</fullName>
    </alternativeName>
</protein>
<accession>Q5R673</accession>
<sequence length="465" mass="52614">MPKKAKPAGSGKEEGPVPCKQMKVEAAGGPSALNFDSPSSLFESLISPIKTETFFKEFWEQKPLLIQRDDPALATYYGSLFKLTDLKSLCSRGMYYGRDVNVCRCVNGKKKVLNKDGKAHFLQLRKDFDQKRATIQLHQPQRFKDELWRIQEKLECYFGSLVGSNVYITPAGSQGLPPHYDDVEVFILQLEGEKHWRLYHPTVPLAREYSVEAEERIGRPVHEFMLKPGDLLYFPRGTIHQADTPAGLAHSTHVTISTYQNNSWGDFLLDTISGLVFDAAKEDVELRAGIPRQLLLQVESTTVATRRLSGFLRTLADRLEGTKEVLSSDMKKDFIMHRLPPYSAGDGAELSTPGGKLPRLDSVVRLQFKDHIVLTVLPDQDQSDEAQEKMVYIYHSLKNSREIHMMGNEEETESHGLRFPLSHLDALKQIWNSPAISVNDLKLTTDEEKESLVLSLWTECLIQVV</sequence>
<gene>
    <name type="primary">RIOX2</name>
    <name evidence="2" type="synonym">MINA</name>
</gene>
<evidence type="ECO:0000250" key="1"/>
<evidence type="ECO:0000250" key="2">
    <source>
        <dbReference type="UniProtKB" id="Q8IUF8"/>
    </source>
</evidence>
<evidence type="ECO:0000255" key="3">
    <source>
        <dbReference type="PROSITE-ProRule" id="PRU00538"/>
    </source>
</evidence>
<evidence type="ECO:0000305" key="4"/>
<evidence type="ECO:0000312" key="5">
    <source>
        <dbReference type="EMBL" id="CAH92743.1"/>
    </source>
</evidence>
<comment type="function">
    <text evidence="2">Oxygenase that can act as both a histone lysine demethylase and a ribosomal histidine hydroxylase. Is involved in the demethylation of trimethylated 'Lys-9' on histone H3 (H3K9me3), leading to an increase in ribosomal RNA expression. Also catalyzes the hydroxylation of 60S ribosomal protein L27a on 'His-39'. May play an important role in cell growth and survival. May be involved in ribosome biogenesis, most likely during the assembly process of pre-ribosomal particles.</text>
</comment>
<comment type="catalytic activity">
    <reaction evidence="2">
        <text>L-histidyl-[ribosomal protein uL15] + 2-oxoglutarate + O2 = (3S)-3-hydroxy-L-histidyl-[ribosomal protein uL15] + succinate + CO2</text>
        <dbReference type="Rhea" id="RHEA:54024"/>
        <dbReference type="Rhea" id="RHEA-COMP:13760"/>
        <dbReference type="Rhea" id="RHEA-COMP:13761"/>
        <dbReference type="ChEBI" id="CHEBI:15379"/>
        <dbReference type="ChEBI" id="CHEBI:16526"/>
        <dbReference type="ChEBI" id="CHEBI:16810"/>
        <dbReference type="ChEBI" id="CHEBI:29979"/>
        <dbReference type="ChEBI" id="CHEBI:30031"/>
        <dbReference type="ChEBI" id="CHEBI:138021"/>
    </reaction>
</comment>
<comment type="catalytic activity">
    <reaction evidence="2">
        <text>L-histidyl-[protein] + 2-oxoglutarate + O2 = (3S)-3-hydroxy-L-histidyl-[protein] + succinate + CO2</text>
        <dbReference type="Rhea" id="RHEA:54256"/>
        <dbReference type="Rhea" id="RHEA-COMP:9745"/>
        <dbReference type="Rhea" id="RHEA-COMP:13840"/>
        <dbReference type="ChEBI" id="CHEBI:15379"/>
        <dbReference type="ChEBI" id="CHEBI:16526"/>
        <dbReference type="ChEBI" id="CHEBI:16810"/>
        <dbReference type="ChEBI" id="CHEBI:29979"/>
        <dbReference type="ChEBI" id="CHEBI:30031"/>
        <dbReference type="ChEBI" id="CHEBI:138021"/>
        <dbReference type="EC" id="1.14.11.79"/>
    </reaction>
</comment>
<comment type="cofactor">
    <cofactor evidence="1">
        <name>Fe(2+)</name>
        <dbReference type="ChEBI" id="CHEBI:29033"/>
    </cofactor>
    <text evidence="1">Binds 1 Fe(2+) ion per subunit.</text>
</comment>
<comment type="subcellular location">
    <subcellularLocation>
        <location evidence="2">Nucleus</location>
    </subcellularLocation>
    <subcellularLocation>
        <location evidence="2">Nucleus</location>
        <location evidence="2">Nucleolus</location>
    </subcellularLocation>
</comment>
<comment type="similarity">
    <text evidence="4">Belongs to the ROX family. MINA53 subfamily.</text>
</comment>
<feature type="chain" id="PRO_0000308379" description="Ribosomal oxygenase 2">
    <location>
        <begin position="1"/>
        <end position="465"/>
    </location>
</feature>
<feature type="domain" description="JmjC" evidence="3">
    <location>
        <begin position="139"/>
        <end position="271"/>
    </location>
</feature>
<feature type="binding site" evidence="3">
    <location>
        <position position="179"/>
    </location>
    <ligand>
        <name>Fe cation</name>
        <dbReference type="ChEBI" id="CHEBI:24875"/>
        <note>catalytic</note>
    </ligand>
</feature>
<feature type="binding site" evidence="3">
    <location>
        <position position="181"/>
    </location>
    <ligand>
        <name>Fe cation</name>
        <dbReference type="ChEBI" id="CHEBI:24875"/>
        <note>catalytic</note>
    </ligand>
</feature>
<feature type="binding site" evidence="3">
    <location>
        <position position="240"/>
    </location>
    <ligand>
        <name>Fe cation</name>
        <dbReference type="ChEBI" id="CHEBI:24875"/>
        <note>catalytic</note>
    </ligand>
</feature>
<feature type="modified residue" description="Phosphoserine" evidence="2">
    <location>
        <position position="309"/>
    </location>
</feature>
<reference evidence="5" key="1">
    <citation type="submission" date="2004-11" db="EMBL/GenBank/DDBJ databases">
        <authorList>
            <consortium name="The German cDNA consortium"/>
        </authorList>
    </citation>
    <scope>NUCLEOTIDE SEQUENCE [LARGE SCALE MRNA]</scope>
    <source>
        <tissue evidence="5">Brain cortex</tissue>
    </source>
</reference>
<keyword id="KW-0223">Dioxygenase</keyword>
<keyword id="KW-0408">Iron</keyword>
<keyword id="KW-0479">Metal-binding</keyword>
<keyword id="KW-0539">Nucleus</keyword>
<keyword id="KW-0560">Oxidoreductase</keyword>
<keyword id="KW-0597">Phosphoprotein</keyword>
<keyword id="KW-1185">Reference proteome</keyword>
<keyword id="KW-0690">Ribosome biogenesis</keyword>
<keyword id="KW-0804">Transcription</keyword>
<keyword id="KW-0805">Transcription regulation</keyword>
<dbReference type="EC" id="1.14.11.79" evidence="2"/>
<dbReference type="EMBL" id="CR860623">
    <property type="protein sequence ID" value="CAH92743.1"/>
    <property type="molecule type" value="mRNA"/>
</dbReference>
<dbReference type="RefSeq" id="NP_001127580.1">
    <property type="nucleotide sequence ID" value="NM_001134108.1"/>
</dbReference>
<dbReference type="RefSeq" id="XP_024099935.3">
    <property type="nucleotide sequence ID" value="XM_024244167.3"/>
</dbReference>
<dbReference type="RefSeq" id="XP_024099936.3">
    <property type="nucleotide sequence ID" value="XM_024244168.3"/>
</dbReference>
<dbReference type="SMR" id="Q5R673"/>
<dbReference type="FunCoup" id="Q5R673">
    <property type="interactions" value="1170"/>
</dbReference>
<dbReference type="STRING" id="9601.ENSPPYP00000015228"/>
<dbReference type="Ensembl" id="ENSPPYT00000015835.2">
    <property type="protein sequence ID" value="ENSPPYP00000015228.2"/>
    <property type="gene ID" value="ENSPPYG00000013621.3"/>
</dbReference>
<dbReference type="GeneID" id="100174658"/>
<dbReference type="KEGG" id="pon:100174658"/>
<dbReference type="CTD" id="84864"/>
<dbReference type="eggNOG" id="KOG3706">
    <property type="taxonomic scope" value="Eukaryota"/>
</dbReference>
<dbReference type="GeneTree" id="ENSGT00390000000083"/>
<dbReference type="InParanoid" id="Q5R673"/>
<dbReference type="OMA" id="IRREMVY"/>
<dbReference type="OrthoDB" id="425950at2759"/>
<dbReference type="Proteomes" id="UP000001595">
    <property type="component" value="Chromosome 3"/>
</dbReference>
<dbReference type="GO" id="GO:0005730">
    <property type="term" value="C:nucleolus"/>
    <property type="evidence" value="ECO:0007669"/>
    <property type="project" value="UniProtKB-SubCell"/>
</dbReference>
<dbReference type="GO" id="GO:0005654">
    <property type="term" value="C:nucleoplasm"/>
    <property type="evidence" value="ECO:0007669"/>
    <property type="project" value="Ensembl"/>
</dbReference>
<dbReference type="GO" id="GO:0051864">
    <property type="term" value="F:histone H3K36 demethylase activity"/>
    <property type="evidence" value="ECO:0007669"/>
    <property type="project" value="TreeGrafter"/>
</dbReference>
<dbReference type="GO" id="GO:0032453">
    <property type="term" value="F:histone H3K4 demethylase activity"/>
    <property type="evidence" value="ECO:0007669"/>
    <property type="project" value="TreeGrafter"/>
</dbReference>
<dbReference type="GO" id="GO:0042802">
    <property type="term" value="F:identical protein binding"/>
    <property type="evidence" value="ECO:0007669"/>
    <property type="project" value="Ensembl"/>
</dbReference>
<dbReference type="GO" id="GO:0046872">
    <property type="term" value="F:metal ion binding"/>
    <property type="evidence" value="ECO:0007669"/>
    <property type="project" value="UniProtKB-KW"/>
</dbReference>
<dbReference type="GO" id="GO:0036139">
    <property type="term" value="F:peptidyl-histidine dioxygenase activity"/>
    <property type="evidence" value="ECO:0007669"/>
    <property type="project" value="Ensembl"/>
</dbReference>
<dbReference type="GO" id="GO:0042254">
    <property type="term" value="P:ribosome biogenesis"/>
    <property type="evidence" value="ECO:0007669"/>
    <property type="project" value="UniProtKB-KW"/>
</dbReference>
<dbReference type="FunFam" id="2.60.120.650:FF:000032">
    <property type="entry name" value="Ribosomal oxygenase 2"/>
    <property type="match status" value="1"/>
</dbReference>
<dbReference type="FunFam" id="3.90.930.40:FF:000002">
    <property type="entry name" value="Ribosomal oxygenase 2"/>
    <property type="match status" value="1"/>
</dbReference>
<dbReference type="FunFam" id="1.10.10.1500:FF:000002">
    <property type="entry name" value="ribosomal oxygenase 2 isoform X1"/>
    <property type="match status" value="1"/>
</dbReference>
<dbReference type="Gene3D" id="3.90.930.40">
    <property type="match status" value="1"/>
</dbReference>
<dbReference type="Gene3D" id="2.60.120.650">
    <property type="entry name" value="Cupin"/>
    <property type="match status" value="1"/>
</dbReference>
<dbReference type="Gene3D" id="1.10.10.1500">
    <property type="entry name" value="JmjC domain-containing ribosomal oxygenase (ROX), dimer domain"/>
    <property type="match status" value="1"/>
</dbReference>
<dbReference type="InterPro" id="IPR003347">
    <property type="entry name" value="JmjC_dom"/>
</dbReference>
<dbReference type="InterPro" id="IPR039994">
    <property type="entry name" value="NO66-like"/>
</dbReference>
<dbReference type="InterPro" id="IPR046799">
    <property type="entry name" value="ROXA-like_wH"/>
</dbReference>
<dbReference type="PANTHER" id="PTHR13096">
    <property type="entry name" value="MINA53 MYC INDUCED NUCLEAR ANTIGEN"/>
    <property type="match status" value="1"/>
</dbReference>
<dbReference type="PANTHER" id="PTHR13096:SF7">
    <property type="entry name" value="RIBOSOMAL OXYGENASE 2"/>
    <property type="match status" value="1"/>
</dbReference>
<dbReference type="Pfam" id="PF08007">
    <property type="entry name" value="JmjC_2"/>
    <property type="match status" value="1"/>
</dbReference>
<dbReference type="Pfam" id="PF20514">
    <property type="entry name" value="ROXA-like_wH"/>
    <property type="match status" value="1"/>
</dbReference>
<dbReference type="SUPFAM" id="SSF51197">
    <property type="entry name" value="Clavaminate synthase-like"/>
    <property type="match status" value="1"/>
</dbReference>
<dbReference type="PROSITE" id="PS51184">
    <property type="entry name" value="JMJC"/>
    <property type="match status" value="1"/>
</dbReference>
<organism>
    <name type="scientific">Pongo abelii</name>
    <name type="common">Sumatran orangutan</name>
    <name type="synonym">Pongo pygmaeus abelii</name>
    <dbReference type="NCBI Taxonomy" id="9601"/>
    <lineage>
        <taxon>Eukaryota</taxon>
        <taxon>Metazoa</taxon>
        <taxon>Chordata</taxon>
        <taxon>Craniata</taxon>
        <taxon>Vertebrata</taxon>
        <taxon>Euteleostomi</taxon>
        <taxon>Mammalia</taxon>
        <taxon>Eutheria</taxon>
        <taxon>Euarchontoglires</taxon>
        <taxon>Primates</taxon>
        <taxon>Haplorrhini</taxon>
        <taxon>Catarrhini</taxon>
        <taxon>Hominidae</taxon>
        <taxon>Pongo</taxon>
    </lineage>
</organism>
<proteinExistence type="evidence at transcript level"/>